<gene>
    <name type="primary">bglA</name>
    <name type="synonym">bgl1</name>
    <name type="ORF">AN4102</name>
</gene>
<organism>
    <name type="scientific">Emericella nidulans (strain FGSC A4 / ATCC 38163 / CBS 112.46 / NRRL 194 / M139)</name>
    <name type="common">Aspergillus nidulans</name>
    <dbReference type="NCBI Taxonomy" id="227321"/>
    <lineage>
        <taxon>Eukaryota</taxon>
        <taxon>Fungi</taxon>
        <taxon>Dikarya</taxon>
        <taxon>Ascomycota</taxon>
        <taxon>Pezizomycotina</taxon>
        <taxon>Eurotiomycetes</taxon>
        <taxon>Eurotiomycetidae</taxon>
        <taxon>Eurotiales</taxon>
        <taxon>Aspergillaceae</taxon>
        <taxon>Aspergillus</taxon>
        <taxon>Aspergillus subgen. Nidulantes</taxon>
    </lineage>
</organism>
<protein>
    <recommendedName>
        <fullName>Probable beta-glucosidase A</fullName>
        <ecNumber>3.2.1.21</ecNumber>
    </recommendedName>
    <alternativeName>
        <fullName>Beta-D-glucoside glucohydrolase A</fullName>
    </alternativeName>
    <alternativeName>
        <fullName>Cellobiase A</fullName>
    </alternativeName>
    <alternativeName>
        <fullName>Gentiobiase A</fullName>
    </alternativeName>
</protein>
<sequence length="863" mass="93242">MKLGWLEAAALTAASVASAQVKQDDLPVSPPYYPSPWSNGEGEWAEAYNRAVQIVSQMTLDEKVNLTTGTGMSEKCVGQTGSVPRLGINSICLQDGPLGIRFTDYNSAFPAGVNVAATWDRQLAYIRGHAMGQEFSDKGIDVQLGPAAGPLGRFPDGGRNWEGFSPDPVLSGVLFAETIKGIQDAGVIATAKHYLLNEQEHFRQVPEANGYGYNITETLSENVDDKTLHELYLWPFADAVRAGVGAIMCSYQHLNNTQACQNSHLLNKLLKAELGFQGFVMSDWSATHSGVGSALAGMDMTMPGDIAFNDGLSYYGPNLTISVLNGTVPQWRVDDMAVRVMAAFYKVGRDRLATPPNFSSWTRAEKGYEHASIDGGAYGTVNEFVDVQQDHASLIRRVGADSIVLLKNEGSLPLTGKERNVAILGEDAGSNPYGANGCDDRGCAQGTLAMGWGSGTANFPYLVTPEQAIQQEVLKGRGNVFAVTDNWALDKVNKTASESTVSLVFVNAGAGEGFISVDGNEGDRKNLTLWKNGENLIKAAASNCNNTIVVIHSVGAVLVDQFYEHPNVTAILWAGLPGQESGNSLVDVLYGRVNPNGKSPFTWGKTREAYGAPLLTEANNGNGAPQTDHTEGVFIDYRHFDRTNQTPIYEFGHGLSYTTFKYSNLTVQKLNAPAYSPASGQTKAAPTFGTIGEAEDYVFPDSITRVREFIYPWINSTDLKESSGDPNYGWDDEDYIPEGAKDGSPQDVLPSGGGAGGNPRLYDDLFRITAIIKNTGPVAGTEVPQLYVSLGGPNEPKVVLRGFDKLVIQPGEERVFTTTLTRRDLSNWDMEKDDWVITSYPKKVFVGSSSRKLPLRASLPAVQ</sequence>
<proteinExistence type="inferred from homology"/>
<comment type="function">
    <text evidence="1">Beta-glucosidases are one of a number of cellulolytic enzymes involved in the degradation of cellulosic biomass. Catalyzes the last step releasing glucose from the inhibitory cellobiose (By similarity).</text>
</comment>
<comment type="catalytic activity">
    <reaction>
        <text>Hydrolysis of terminal, non-reducing beta-D-glucosyl residues with release of beta-D-glucose.</text>
        <dbReference type="EC" id="3.2.1.21"/>
    </reaction>
</comment>
<comment type="pathway">
    <text>Glycan metabolism; cellulose degradation.</text>
</comment>
<comment type="subcellular location">
    <subcellularLocation>
        <location evidence="1">Secreted</location>
    </subcellularLocation>
</comment>
<comment type="similarity">
    <text evidence="4">Belongs to the glycosyl hydrolase 3 family.</text>
</comment>
<comment type="sequence caution" evidence="4">
    <conflict type="erroneous gene model prediction">
        <sequence resource="EMBL-CDS" id="CBF74704"/>
    </conflict>
</comment>
<comment type="sequence caution" evidence="4">
    <conflict type="frameshift">
        <sequence resource="EMBL-CDS" id="CBF74704"/>
    </conflict>
</comment>
<comment type="sequence caution" evidence="4">
    <conflict type="erroneous gene model prediction">
        <sequence resource="EMBL-CDS" id="EAA59363"/>
    </conflict>
</comment>
<comment type="sequence caution" evidence="4">
    <conflict type="frameshift">
        <sequence resource="EMBL-CDS" id="EAA59363"/>
    </conflict>
</comment>
<name>BGLA_EMENI</name>
<evidence type="ECO:0000250" key="1"/>
<evidence type="ECO:0000255" key="2"/>
<evidence type="ECO:0000256" key="3">
    <source>
        <dbReference type="SAM" id="MobiDB-lite"/>
    </source>
</evidence>
<evidence type="ECO:0000305" key="4"/>
<feature type="signal peptide" evidence="2">
    <location>
        <begin position="1"/>
        <end position="19"/>
    </location>
</feature>
<feature type="chain" id="PRO_0000394100" description="Probable beta-glucosidase A">
    <location>
        <begin position="20"/>
        <end position="863"/>
    </location>
</feature>
<feature type="region of interest" description="Disordered" evidence="3">
    <location>
        <begin position="720"/>
        <end position="754"/>
    </location>
</feature>
<feature type="active site" evidence="1">
    <location>
        <position position="283"/>
    </location>
</feature>
<feature type="glycosylation site" description="N-linked (GlcNAc...) asparagine" evidence="2">
    <location>
        <position position="65"/>
    </location>
</feature>
<feature type="glycosylation site" description="N-linked (GlcNAc...) asparagine" evidence="2">
    <location>
        <position position="214"/>
    </location>
</feature>
<feature type="glycosylation site" description="N-linked (GlcNAc...) asparagine" evidence="2">
    <location>
        <position position="255"/>
    </location>
</feature>
<feature type="glycosylation site" description="N-linked (GlcNAc...) asparagine" evidence="2">
    <location>
        <position position="318"/>
    </location>
</feature>
<feature type="glycosylation site" description="N-linked (GlcNAc...) asparagine" evidence="2">
    <location>
        <position position="325"/>
    </location>
</feature>
<feature type="glycosylation site" description="N-linked (GlcNAc...) asparagine" evidence="2">
    <location>
        <position position="357"/>
    </location>
</feature>
<feature type="glycosylation site" description="N-linked (GlcNAc...) asparagine" evidence="2">
    <location>
        <position position="493"/>
    </location>
</feature>
<feature type="glycosylation site" description="N-linked (GlcNAc...) asparagine" evidence="2">
    <location>
        <position position="526"/>
    </location>
</feature>
<feature type="glycosylation site" description="N-linked (GlcNAc...) asparagine" evidence="2">
    <location>
        <position position="545"/>
    </location>
</feature>
<feature type="glycosylation site" description="N-linked (GlcNAc...) asparagine" evidence="2">
    <location>
        <position position="567"/>
    </location>
</feature>
<feature type="glycosylation site" description="N-linked (GlcNAc...) asparagine" evidence="2">
    <location>
        <position position="664"/>
    </location>
</feature>
<feature type="glycosylation site" description="N-linked (GlcNAc...) asparagine" evidence="2">
    <location>
        <position position="715"/>
    </location>
</feature>
<keyword id="KW-0119">Carbohydrate metabolism</keyword>
<keyword id="KW-0136">Cellulose degradation</keyword>
<keyword id="KW-0325">Glycoprotein</keyword>
<keyword id="KW-0326">Glycosidase</keyword>
<keyword id="KW-0378">Hydrolase</keyword>
<keyword id="KW-0624">Polysaccharide degradation</keyword>
<keyword id="KW-1185">Reference proteome</keyword>
<keyword id="KW-0964">Secreted</keyword>
<keyword id="KW-0732">Signal</keyword>
<dbReference type="EC" id="3.2.1.21"/>
<dbReference type="EMBL" id="AACD01000067">
    <property type="protein sequence ID" value="EAA59363.1"/>
    <property type="status" value="ALT_SEQ"/>
    <property type="molecule type" value="Genomic_DNA"/>
</dbReference>
<dbReference type="EMBL" id="BN001302">
    <property type="protein sequence ID" value="CBF74704.1"/>
    <property type="status" value="ALT_SEQ"/>
    <property type="molecule type" value="Genomic_DNA"/>
</dbReference>
<dbReference type="RefSeq" id="XP_661706.1">
    <property type="nucleotide sequence ID" value="XM_656614.1"/>
</dbReference>
<dbReference type="SMR" id="Q5B5S8"/>
<dbReference type="STRING" id="227321.Q5B5S8"/>
<dbReference type="CAZy" id="GH3">
    <property type="family name" value="Glycoside Hydrolase Family 3"/>
</dbReference>
<dbReference type="GlyCosmos" id="Q5B5S8">
    <property type="glycosylation" value="12 sites, No reported glycans"/>
</dbReference>
<dbReference type="eggNOG" id="ENOG502QR4D">
    <property type="taxonomic scope" value="Eukaryota"/>
</dbReference>
<dbReference type="HOGENOM" id="CLU_004542_2_0_1"/>
<dbReference type="InParanoid" id="Q5B5S8"/>
<dbReference type="UniPathway" id="UPA00696"/>
<dbReference type="Proteomes" id="UP000000560">
    <property type="component" value="Chromosome II"/>
</dbReference>
<dbReference type="GO" id="GO:0005576">
    <property type="term" value="C:extracellular region"/>
    <property type="evidence" value="ECO:0007669"/>
    <property type="project" value="UniProtKB-SubCell"/>
</dbReference>
<dbReference type="GO" id="GO:0008422">
    <property type="term" value="F:beta-glucosidase activity"/>
    <property type="evidence" value="ECO:0000318"/>
    <property type="project" value="GO_Central"/>
</dbReference>
<dbReference type="GO" id="GO:0030245">
    <property type="term" value="P:cellulose catabolic process"/>
    <property type="evidence" value="ECO:0007669"/>
    <property type="project" value="UniProtKB-UniPathway"/>
</dbReference>
<dbReference type="GO" id="GO:0009251">
    <property type="term" value="P:glucan catabolic process"/>
    <property type="evidence" value="ECO:0000318"/>
    <property type="project" value="GO_Central"/>
</dbReference>
<dbReference type="FunFam" id="2.60.40.10:FF:001391">
    <property type="entry name" value="Beta-glucosidase"/>
    <property type="match status" value="1"/>
</dbReference>
<dbReference type="FunFam" id="3.20.20.300:FF:000002">
    <property type="entry name" value="Probable beta-glucosidase"/>
    <property type="match status" value="1"/>
</dbReference>
<dbReference type="FunFam" id="3.40.50.1700:FF:000003">
    <property type="entry name" value="Probable beta-glucosidase"/>
    <property type="match status" value="1"/>
</dbReference>
<dbReference type="Gene3D" id="3.40.50.1700">
    <property type="entry name" value="Glycoside hydrolase family 3 C-terminal domain"/>
    <property type="match status" value="1"/>
</dbReference>
<dbReference type="Gene3D" id="3.20.20.300">
    <property type="entry name" value="Glycoside hydrolase, family 3, N-terminal domain"/>
    <property type="match status" value="1"/>
</dbReference>
<dbReference type="Gene3D" id="2.60.40.10">
    <property type="entry name" value="Immunoglobulins"/>
    <property type="match status" value="1"/>
</dbReference>
<dbReference type="InterPro" id="IPR050288">
    <property type="entry name" value="Cellulose_deg_GH3"/>
</dbReference>
<dbReference type="InterPro" id="IPR026891">
    <property type="entry name" value="Fn3-like"/>
</dbReference>
<dbReference type="InterPro" id="IPR019800">
    <property type="entry name" value="Glyco_hydro_3_AS"/>
</dbReference>
<dbReference type="InterPro" id="IPR002772">
    <property type="entry name" value="Glyco_hydro_3_C"/>
</dbReference>
<dbReference type="InterPro" id="IPR036881">
    <property type="entry name" value="Glyco_hydro_3_C_sf"/>
</dbReference>
<dbReference type="InterPro" id="IPR001764">
    <property type="entry name" value="Glyco_hydro_3_N"/>
</dbReference>
<dbReference type="InterPro" id="IPR036962">
    <property type="entry name" value="Glyco_hydro_3_N_sf"/>
</dbReference>
<dbReference type="InterPro" id="IPR017853">
    <property type="entry name" value="Glycoside_hydrolase_SF"/>
</dbReference>
<dbReference type="InterPro" id="IPR013783">
    <property type="entry name" value="Ig-like_fold"/>
</dbReference>
<dbReference type="PANTHER" id="PTHR42715">
    <property type="entry name" value="BETA-GLUCOSIDASE"/>
    <property type="match status" value="1"/>
</dbReference>
<dbReference type="PANTHER" id="PTHR42715:SF29">
    <property type="entry name" value="BETA-GLUCOSIDASE A-RELATED"/>
    <property type="match status" value="1"/>
</dbReference>
<dbReference type="Pfam" id="PF14310">
    <property type="entry name" value="Fn3-like"/>
    <property type="match status" value="1"/>
</dbReference>
<dbReference type="Pfam" id="PF00933">
    <property type="entry name" value="Glyco_hydro_3"/>
    <property type="match status" value="1"/>
</dbReference>
<dbReference type="Pfam" id="PF01915">
    <property type="entry name" value="Glyco_hydro_3_C"/>
    <property type="match status" value="1"/>
</dbReference>
<dbReference type="PRINTS" id="PR00133">
    <property type="entry name" value="GLHYDRLASE3"/>
</dbReference>
<dbReference type="SMART" id="SM01217">
    <property type="entry name" value="Fn3_like"/>
    <property type="match status" value="1"/>
</dbReference>
<dbReference type="SUPFAM" id="SSF51445">
    <property type="entry name" value="(Trans)glycosidases"/>
    <property type="match status" value="1"/>
</dbReference>
<dbReference type="SUPFAM" id="SSF52279">
    <property type="entry name" value="Beta-D-glucan exohydrolase, C-terminal domain"/>
    <property type="match status" value="1"/>
</dbReference>
<dbReference type="PROSITE" id="PS00775">
    <property type="entry name" value="GLYCOSYL_HYDROL_F3"/>
    <property type="match status" value="1"/>
</dbReference>
<reference key="1">
    <citation type="journal article" date="2005" name="Nature">
        <title>Sequencing of Aspergillus nidulans and comparative analysis with A. fumigatus and A. oryzae.</title>
        <authorList>
            <person name="Galagan J.E."/>
            <person name="Calvo S.E."/>
            <person name="Cuomo C."/>
            <person name="Ma L.-J."/>
            <person name="Wortman J.R."/>
            <person name="Batzoglou S."/>
            <person name="Lee S.-I."/>
            <person name="Bastuerkmen M."/>
            <person name="Spevak C.C."/>
            <person name="Clutterbuck J."/>
            <person name="Kapitonov V."/>
            <person name="Jurka J."/>
            <person name="Scazzocchio C."/>
            <person name="Farman M.L."/>
            <person name="Butler J."/>
            <person name="Purcell S."/>
            <person name="Harris S."/>
            <person name="Braus G.H."/>
            <person name="Draht O."/>
            <person name="Busch S."/>
            <person name="D'Enfert C."/>
            <person name="Bouchier C."/>
            <person name="Goldman G.H."/>
            <person name="Bell-Pedersen D."/>
            <person name="Griffiths-Jones S."/>
            <person name="Doonan J.H."/>
            <person name="Yu J."/>
            <person name="Vienken K."/>
            <person name="Pain A."/>
            <person name="Freitag M."/>
            <person name="Selker E.U."/>
            <person name="Archer D.B."/>
            <person name="Penalva M.A."/>
            <person name="Oakley B.R."/>
            <person name="Momany M."/>
            <person name="Tanaka T."/>
            <person name="Kumagai T."/>
            <person name="Asai K."/>
            <person name="Machida M."/>
            <person name="Nierman W.C."/>
            <person name="Denning D.W."/>
            <person name="Caddick M.X."/>
            <person name="Hynes M."/>
            <person name="Paoletti M."/>
            <person name="Fischer R."/>
            <person name="Miller B.L."/>
            <person name="Dyer P.S."/>
            <person name="Sachs M.S."/>
            <person name="Osmani S.A."/>
            <person name="Birren B.W."/>
        </authorList>
    </citation>
    <scope>NUCLEOTIDE SEQUENCE [LARGE SCALE GENOMIC DNA]</scope>
    <source>
        <strain>FGSC A4 / ATCC 38163 / CBS 112.46 / NRRL 194 / M139</strain>
    </source>
</reference>
<reference key="2">
    <citation type="journal article" date="2009" name="Fungal Genet. Biol.">
        <title>The 2008 update of the Aspergillus nidulans genome annotation: a community effort.</title>
        <authorList>
            <person name="Wortman J.R."/>
            <person name="Gilsenan J.M."/>
            <person name="Joardar V."/>
            <person name="Deegan J."/>
            <person name="Clutterbuck J."/>
            <person name="Andersen M.R."/>
            <person name="Archer D."/>
            <person name="Bencina M."/>
            <person name="Braus G."/>
            <person name="Coutinho P."/>
            <person name="von Dohren H."/>
            <person name="Doonan J."/>
            <person name="Driessen A.J."/>
            <person name="Durek P."/>
            <person name="Espeso E."/>
            <person name="Fekete E."/>
            <person name="Flipphi M."/>
            <person name="Estrada C.G."/>
            <person name="Geysens S."/>
            <person name="Goldman G."/>
            <person name="de Groot P.W."/>
            <person name="Hansen K."/>
            <person name="Harris S.D."/>
            <person name="Heinekamp T."/>
            <person name="Helmstaedt K."/>
            <person name="Henrissat B."/>
            <person name="Hofmann G."/>
            <person name="Homan T."/>
            <person name="Horio T."/>
            <person name="Horiuchi H."/>
            <person name="James S."/>
            <person name="Jones M."/>
            <person name="Karaffa L."/>
            <person name="Karanyi Z."/>
            <person name="Kato M."/>
            <person name="Keller N."/>
            <person name="Kelly D.E."/>
            <person name="Kiel J.A."/>
            <person name="Kim J.M."/>
            <person name="van der Klei I.J."/>
            <person name="Klis F.M."/>
            <person name="Kovalchuk A."/>
            <person name="Krasevec N."/>
            <person name="Kubicek C.P."/>
            <person name="Liu B."/>
            <person name="Maccabe A."/>
            <person name="Meyer V."/>
            <person name="Mirabito P."/>
            <person name="Miskei M."/>
            <person name="Mos M."/>
            <person name="Mullins J."/>
            <person name="Nelson D.R."/>
            <person name="Nielsen J."/>
            <person name="Oakley B.R."/>
            <person name="Osmani S.A."/>
            <person name="Pakula T."/>
            <person name="Paszewski A."/>
            <person name="Paulsen I."/>
            <person name="Pilsyk S."/>
            <person name="Pocsi I."/>
            <person name="Punt P.J."/>
            <person name="Ram A.F."/>
            <person name="Ren Q."/>
            <person name="Robellet X."/>
            <person name="Robson G."/>
            <person name="Seiboth B."/>
            <person name="van Solingen P."/>
            <person name="Specht T."/>
            <person name="Sun J."/>
            <person name="Taheri-Talesh N."/>
            <person name="Takeshita N."/>
            <person name="Ussery D."/>
            <person name="vanKuyk P.A."/>
            <person name="Visser H."/>
            <person name="van de Vondervoort P.J."/>
            <person name="de Vries R.P."/>
            <person name="Walton J."/>
            <person name="Xiang X."/>
            <person name="Xiong Y."/>
            <person name="Zeng A.P."/>
            <person name="Brandt B.W."/>
            <person name="Cornell M.J."/>
            <person name="van den Hondel C.A."/>
            <person name="Visser J."/>
            <person name="Oliver S.G."/>
            <person name="Turner G."/>
        </authorList>
    </citation>
    <scope>GENOME REANNOTATION</scope>
    <source>
        <strain>FGSC A4 / ATCC 38163 / CBS 112.46 / NRRL 194 / M139</strain>
    </source>
</reference>
<accession>Q5B5S8</accession>
<accession>C8V5A6</accession>